<dbReference type="EMBL" id="CU468135">
    <property type="protein sequence ID" value="CAO95164.1"/>
    <property type="molecule type" value="Genomic_DNA"/>
</dbReference>
<dbReference type="RefSeq" id="WP_012439890.1">
    <property type="nucleotide sequence ID" value="NC_010694.1"/>
</dbReference>
<dbReference type="SMR" id="B2VES3"/>
<dbReference type="STRING" id="465817.ETA_01180"/>
<dbReference type="KEGG" id="eta:ETA_01180"/>
<dbReference type="eggNOG" id="COG1220">
    <property type="taxonomic scope" value="Bacteria"/>
</dbReference>
<dbReference type="HOGENOM" id="CLU_033123_0_0_6"/>
<dbReference type="OrthoDB" id="9804062at2"/>
<dbReference type="Proteomes" id="UP000001726">
    <property type="component" value="Chromosome"/>
</dbReference>
<dbReference type="GO" id="GO:0009376">
    <property type="term" value="C:HslUV protease complex"/>
    <property type="evidence" value="ECO:0007669"/>
    <property type="project" value="UniProtKB-UniRule"/>
</dbReference>
<dbReference type="GO" id="GO:0005524">
    <property type="term" value="F:ATP binding"/>
    <property type="evidence" value="ECO:0007669"/>
    <property type="project" value="UniProtKB-UniRule"/>
</dbReference>
<dbReference type="GO" id="GO:0016887">
    <property type="term" value="F:ATP hydrolysis activity"/>
    <property type="evidence" value="ECO:0007669"/>
    <property type="project" value="InterPro"/>
</dbReference>
<dbReference type="GO" id="GO:0008233">
    <property type="term" value="F:peptidase activity"/>
    <property type="evidence" value="ECO:0007669"/>
    <property type="project" value="InterPro"/>
</dbReference>
<dbReference type="GO" id="GO:0036402">
    <property type="term" value="F:proteasome-activating activity"/>
    <property type="evidence" value="ECO:0007669"/>
    <property type="project" value="UniProtKB-UniRule"/>
</dbReference>
<dbReference type="GO" id="GO:0043335">
    <property type="term" value="P:protein unfolding"/>
    <property type="evidence" value="ECO:0007669"/>
    <property type="project" value="UniProtKB-UniRule"/>
</dbReference>
<dbReference type="GO" id="GO:0051603">
    <property type="term" value="P:proteolysis involved in protein catabolic process"/>
    <property type="evidence" value="ECO:0007669"/>
    <property type="project" value="TreeGrafter"/>
</dbReference>
<dbReference type="CDD" id="cd19498">
    <property type="entry name" value="RecA-like_HslU"/>
    <property type="match status" value="1"/>
</dbReference>
<dbReference type="FunFam" id="1.10.8.10:FF:000028">
    <property type="entry name" value="ATP-dependent protease ATPase subunit HslU"/>
    <property type="match status" value="2"/>
</dbReference>
<dbReference type="FunFam" id="1.10.8.60:FF:000027">
    <property type="entry name" value="ATP-dependent protease ATPase subunit HslU"/>
    <property type="match status" value="1"/>
</dbReference>
<dbReference type="FunFam" id="3.40.50.300:FF:000213">
    <property type="entry name" value="ATP-dependent protease ATPase subunit HslU"/>
    <property type="match status" value="1"/>
</dbReference>
<dbReference type="FunFam" id="3.40.50.300:FF:000220">
    <property type="entry name" value="ATP-dependent protease ATPase subunit HslU"/>
    <property type="match status" value="1"/>
</dbReference>
<dbReference type="Gene3D" id="1.10.8.60">
    <property type="match status" value="1"/>
</dbReference>
<dbReference type="Gene3D" id="1.10.8.10">
    <property type="entry name" value="DNA helicase RuvA subunit, C-terminal domain"/>
    <property type="match status" value="1"/>
</dbReference>
<dbReference type="Gene3D" id="3.40.50.300">
    <property type="entry name" value="P-loop containing nucleotide triphosphate hydrolases"/>
    <property type="match status" value="2"/>
</dbReference>
<dbReference type="HAMAP" id="MF_00249">
    <property type="entry name" value="HslU"/>
    <property type="match status" value="1"/>
</dbReference>
<dbReference type="InterPro" id="IPR003593">
    <property type="entry name" value="AAA+_ATPase"/>
</dbReference>
<dbReference type="InterPro" id="IPR050052">
    <property type="entry name" value="ATP-dep_Clp_protease_ClpX"/>
</dbReference>
<dbReference type="InterPro" id="IPR003959">
    <property type="entry name" value="ATPase_AAA_core"/>
</dbReference>
<dbReference type="InterPro" id="IPR019489">
    <property type="entry name" value="Clp_ATPase_C"/>
</dbReference>
<dbReference type="InterPro" id="IPR004491">
    <property type="entry name" value="HslU"/>
</dbReference>
<dbReference type="InterPro" id="IPR027417">
    <property type="entry name" value="P-loop_NTPase"/>
</dbReference>
<dbReference type="NCBIfam" id="TIGR00390">
    <property type="entry name" value="hslU"/>
    <property type="match status" value="1"/>
</dbReference>
<dbReference type="NCBIfam" id="NF003544">
    <property type="entry name" value="PRK05201.1"/>
    <property type="match status" value="1"/>
</dbReference>
<dbReference type="PANTHER" id="PTHR48102">
    <property type="entry name" value="ATP-DEPENDENT CLP PROTEASE ATP-BINDING SUBUNIT CLPX-LIKE, MITOCHONDRIAL-RELATED"/>
    <property type="match status" value="1"/>
</dbReference>
<dbReference type="PANTHER" id="PTHR48102:SF3">
    <property type="entry name" value="ATP-DEPENDENT PROTEASE ATPASE SUBUNIT HSLU"/>
    <property type="match status" value="1"/>
</dbReference>
<dbReference type="Pfam" id="PF00004">
    <property type="entry name" value="AAA"/>
    <property type="match status" value="1"/>
</dbReference>
<dbReference type="Pfam" id="PF07724">
    <property type="entry name" value="AAA_2"/>
    <property type="match status" value="1"/>
</dbReference>
<dbReference type="SMART" id="SM00382">
    <property type="entry name" value="AAA"/>
    <property type="match status" value="1"/>
</dbReference>
<dbReference type="SMART" id="SM01086">
    <property type="entry name" value="ClpB_D2-small"/>
    <property type="match status" value="1"/>
</dbReference>
<dbReference type="SUPFAM" id="SSF52540">
    <property type="entry name" value="P-loop containing nucleoside triphosphate hydrolases"/>
    <property type="match status" value="1"/>
</dbReference>
<evidence type="ECO:0000255" key="1">
    <source>
        <dbReference type="HAMAP-Rule" id="MF_00249"/>
    </source>
</evidence>
<evidence type="ECO:0000256" key="2">
    <source>
        <dbReference type="SAM" id="MobiDB-lite"/>
    </source>
</evidence>
<keyword id="KW-0067">ATP-binding</keyword>
<keyword id="KW-0143">Chaperone</keyword>
<keyword id="KW-0963">Cytoplasm</keyword>
<keyword id="KW-0547">Nucleotide-binding</keyword>
<keyword id="KW-1185">Reference proteome</keyword>
<protein>
    <recommendedName>
        <fullName evidence="1">ATP-dependent protease ATPase subunit HslU</fullName>
    </recommendedName>
    <alternativeName>
        <fullName evidence="1">Unfoldase HslU</fullName>
    </alternativeName>
</protein>
<gene>
    <name evidence="1" type="primary">hslU</name>
    <name type="ordered locus">ETA_01180</name>
</gene>
<name>HSLU_ERWT9</name>
<sequence>MSAMTPREIVSELNRFIIGQDGAKRAVAIALRNRWRRMQLDEELRHEVTPKNILMIGPTGVGKTEIARRLAKLANAPFIKVEATKFTEVGYVGKEVDSIIRDLTDSAIKMVRSQAIDRNRNRAEEMAEERILDVLIPPAKNNWGQNETPAEPSSARQSFRKKLREGQLDDKEIEIDLAAISGGVEIMAPPGMEEMTSQLQSMFQNIGGQKQKPRKLKIKEAMKLLVEEEAAKLVNQEELKQEAIDAVEQHGIVFIDEIDKVCKRGESSGPDVSREGVQRDLLPLVEGCTVSTKHGMVKTDHILFIASGAFQVASPSDLIPELQGRLPIRVELQALTTNDFERILTEPSASITVQYKALMNTEGVNITFTPDGISKIAAAAWQVNETAENIGARRLHTVLERLMEEISYDASDLNGQSITIDAEYVSKHLDELVADEDLSRFIL</sequence>
<feature type="chain" id="PRO_1000100948" description="ATP-dependent protease ATPase subunit HslU">
    <location>
        <begin position="1"/>
        <end position="443"/>
    </location>
</feature>
<feature type="region of interest" description="Disordered" evidence="2">
    <location>
        <begin position="139"/>
        <end position="158"/>
    </location>
</feature>
<feature type="binding site" evidence="1">
    <location>
        <position position="18"/>
    </location>
    <ligand>
        <name>ATP</name>
        <dbReference type="ChEBI" id="CHEBI:30616"/>
    </ligand>
</feature>
<feature type="binding site" evidence="1">
    <location>
        <begin position="60"/>
        <end position="65"/>
    </location>
    <ligand>
        <name>ATP</name>
        <dbReference type="ChEBI" id="CHEBI:30616"/>
    </ligand>
</feature>
<feature type="binding site" evidence="1">
    <location>
        <position position="256"/>
    </location>
    <ligand>
        <name>ATP</name>
        <dbReference type="ChEBI" id="CHEBI:30616"/>
    </ligand>
</feature>
<feature type="binding site" evidence="1">
    <location>
        <position position="321"/>
    </location>
    <ligand>
        <name>ATP</name>
        <dbReference type="ChEBI" id="CHEBI:30616"/>
    </ligand>
</feature>
<feature type="binding site" evidence="1">
    <location>
        <position position="393"/>
    </location>
    <ligand>
        <name>ATP</name>
        <dbReference type="ChEBI" id="CHEBI:30616"/>
    </ligand>
</feature>
<reference key="1">
    <citation type="journal article" date="2008" name="Environ. Microbiol.">
        <title>The genome of Erwinia tasmaniensis strain Et1/99, a non-pathogenic bacterium in the genus Erwinia.</title>
        <authorList>
            <person name="Kube M."/>
            <person name="Migdoll A.M."/>
            <person name="Mueller I."/>
            <person name="Kuhl H."/>
            <person name="Beck A."/>
            <person name="Reinhardt R."/>
            <person name="Geider K."/>
        </authorList>
    </citation>
    <scope>NUCLEOTIDE SEQUENCE [LARGE SCALE GENOMIC DNA]</scope>
    <source>
        <strain>DSM 17950 / CFBP 7177 / CIP 109463 / NCPPB 4357 / Et1/99</strain>
    </source>
</reference>
<proteinExistence type="inferred from homology"/>
<organism>
    <name type="scientific">Erwinia tasmaniensis (strain DSM 17950 / CFBP 7177 / CIP 109463 / NCPPB 4357 / Et1/99)</name>
    <dbReference type="NCBI Taxonomy" id="465817"/>
    <lineage>
        <taxon>Bacteria</taxon>
        <taxon>Pseudomonadati</taxon>
        <taxon>Pseudomonadota</taxon>
        <taxon>Gammaproteobacteria</taxon>
        <taxon>Enterobacterales</taxon>
        <taxon>Erwiniaceae</taxon>
        <taxon>Erwinia</taxon>
    </lineage>
</organism>
<comment type="function">
    <text evidence="1">ATPase subunit of a proteasome-like degradation complex; this subunit has chaperone activity. The binding of ATP and its subsequent hydrolysis by HslU are essential for unfolding of protein substrates subsequently hydrolyzed by HslV. HslU recognizes the N-terminal part of its protein substrates and unfolds these before they are guided to HslV for hydrolysis.</text>
</comment>
<comment type="subunit">
    <text evidence="1">A double ring-shaped homohexamer of HslV is capped on each side by a ring-shaped HslU homohexamer. The assembly of the HslU/HslV complex is dependent on binding of ATP.</text>
</comment>
<comment type="subcellular location">
    <subcellularLocation>
        <location evidence="1">Cytoplasm</location>
    </subcellularLocation>
</comment>
<comment type="similarity">
    <text evidence="1">Belongs to the ClpX chaperone family. HslU subfamily.</text>
</comment>
<accession>B2VES3</accession>